<sequence length="238" mass="26595">MGIDELYKKEFGIVAGVDEAGRGCLAGPVVAAAVVLEKEIEGINDSKQLSPAKRERLFDEIMGKAAVGIGIASPEEIDLHNIFNATKLAMNRALENLSVGPSFVLVDGKGIELRVPGTCLVKGDQKSKLIGAASIVAKVFRDRLMSEFHKMYPQFSFHKHKGYATKEHLNEIRKNGVLPIHRMSFEPVLELLTDDLLREFFEKGLISENRFEHIKNLLEAKKSVVFRKERTDHNLPLF</sequence>
<gene>
    <name evidence="1" type="primary">rnhB</name>
    <name type="ordered locus">Tpet_0012</name>
</gene>
<evidence type="ECO:0000255" key="1">
    <source>
        <dbReference type="HAMAP-Rule" id="MF_00052"/>
    </source>
</evidence>
<evidence type="ECO:0000255" key="2">
    <source>
        <dbReference type="PROSITE-ProRule" id="PRU01319"/>
    </source>
</evidence>
<keyword id="KW-0963">Cytoplasm</keyword>
<keyword id="KW-0255">Endonuclease</keyword>
<keyword id="KW-0378">Hydrolase</keyword>
<keyword id="KW-0464">Manganese</keyword>
<keyword id="KW-0479">Metal-binding</keyword>
<keyword id="KW-0540">Nuclease</keyword>
<name>RNH2_THEP1</name>
<protein>
    <recommendedName>
        <fullName evidence="1">Ribonuclease HII</fullName>
        <shortName evidence="1">RNase HII</shortName>
        <ecNumber evidence="1">3.1.26.4</ecNumber>
    </recommendedName>
</protein>
<proteinExistence type="inferred from homology"/>
<comment type="function">
    <text evidence="1">Endonuclease that specifically degrades the RNA of RNA-DNA hybrids.</text>
</comment>
<comment type="catalytic activity">
    <reaction evidence="1">
        <text>Endonucleolytic cleavage to 5'-phosphomonoester.</text>
        <dbReference type="EC" id="3.1.26.4"/>
    </reaction>
</comment>
<comment type="cofactor">
    <cofactor evidence="1">
        <name>Mn(2+)</name>
        <dbReference type="ChEBI" id="CHEBI:29035"/>
    </cofactor>
    <cofactor evidence="1">
        <name>Mg(2+)</name>
        <dbReference type="ChEBI" id="CHEBI:18420"/>
    </cofactor>
    <text evidence="1">Manganese or magnesium. Binds 1 divalent metal ion per monomer in the absence of substrate. May bind a second metal ion after substrate binding.</text>
</comment>
<comment type="subcellular location">
    <subcellularLocation>
        <location evidence="1">Cytoplasm</location>
    </subcellularLocation>
</comment>
<comment type="similarity">
    <text evidence="1">Belongs to the RNase HII family.</text>
</comment>
<dbReference type="EC" id="3.1.26.4" evidence="1"/>
<dbReference type="EMBL" id="CP000702">
    <property type="protein sequence ID" value="ABQ46041.1"/>
    <property type="molecule type" value="Genomic_DNA"/>
</dbReference>
<dbReference type="RefSeq" id="WP_011942719.1">
    <property type="nucleotide sequence ID" value="NC_009486.1"/>
</dbReference>
<dbReference type="SMR" id="A5IIL8"/>
<dbReference type="STRING" id="390874.Tpet_0012"/>
<dbReference type="KEGG" id="tpt:Tpet_0012"/>
<dbReference type="eggNOG" id="COG0164">
    <property type="taxonomic scope" value="Bacteria"/>
</dbReference>
<dbReference type="HOGENOM" id="CLU_036532_3_2_0"/>
<dbReference type="Proteomes" id="UP000006558">
    <property type="component" value="Chromosome"/>
</dbReference>
<dbReference type="GO" id="GO:0005737">
    <property type="term" value="C:cytoplasm"/>
    <property type="evidence" value="ECO:0007669"/>
    <property type="project" value="UniProtKB-SubCell"/>
</dbReference>
<dbReference type="GO" id="GO:0032299">
    <property type="term" value="C:ribonuclease H2 complex"/>
    <property type="evidence" value="ECO:0007669"/>
    <property type="project" value="TreeGrafter"/>
</dbReference>
<dbReference type="GO" id="GO:0030145">
    <property type="term" value="F:manganese ion binding"/>
    <property type="evidence" value="ECO:0007669"/>
    <property type="project" value="UniProtKB-UniRule"/>
</dbReference>
<dbReference type="GO" id="GO:0003723">
    <property type="term" value="F:RNA binding"/>
    <property type="evidence" value="ECO:0007669"/>
    <property type="project" value="InterPro"/>
</dbReference>
<dbReference type="GO" id="GO:0004523">
    <property type="term" value="F:RNA-DNA hybrid ribonuclease activity"/>
    <property type="evidence" value="ECO:0007669"/>
    <property type="project" value="UniProtKB-UniRule"/>
</dbReference>
<dbReference type="GO" id="GO:0043137">
    <property type="term" value="P:DNA replication, removal of RNA primer"/>
    <property type="evidence" value="ECO:0007669"/>
    <property type="project" value="TreeGrafter"/>
</dbReference>
<dbReference type="GO" id="GO:0006298">
    <property type="term" value="P:mismatch repair"/>
    <property type="evidence" value="ECO:0007669"/>
    <property type="project" value="TreeGrafter"/>
</dbReference>
<dbReference type="CDD" id="cd07182">
    <property type="entry name" value="RNase_HII_bacteria_HII_like"/>
    <property type="match status" value="1"/>
</dbReference>
<dbReference type="FunFam" id="3.30.420.10:FF:000142">
    <property type="entry name" value="Ribonuclease HII"/>
    <property type="match status" value="1"/>
</dbReference>
<dbReference type="Gene3D" id="3.30.420.10">
    <property type="entry name" value="Ribonuclease H-like superfamily/Ribonuclease H"/>
    <property type="match status" value="1"/>
</dbReference>
<dbReference type="HAMAP" id="MF_00052_B">
    <property type="entry name" value="RNase_HII_B"/>
    <property type="match status" value="1"/>
</dbReference>
<dbReference type="InterPro" id="IPR022898">
    <property type="entry name" value="RNase_HII"/>
</dbReference>
<dbReference type="InterPro" id="IPR001352">
    <property type="entry name" value="RNase_HII/HIII"/>
</dbReference>
<dbReference type="InterPro" id="IPR024567">
    <property type="entry name" value="RNase_HII/HIII_dom"/>
</dbReference>
<dbReference type="InterPro" id="IPR012337">
    <property type="entry name" value="RNaseH-like_sf"/>
</dbReference>
<dbReference type="InterPro" id="IPR036397">
    <property type="entry name" value="RNaseH_sf"/>
</dbReference>
<dbReference type="NCBIfam" id="NF000594">
    <property type="entry name" value="PRK00015.1-1"/>
    <property type="match status" value="1"/>
</dbReference>
<dbReference type="NCBIfam" id="NF000595">
    <property type="entry name" value="PRK00015.1-3"/>
    <property type="match status" value="1"/>
</dbReference>
<dbReference type="PANTHER" id="PTHR10954">
    <property type="entry name" value="RIBONUCLEASE H2 SUBUNIT A"/>
    <property type="match status" value="1"/>
</dbReference>
<dbReference type="PANTHER" id="PTHR10954:SF18">
    <property type="entry name" value="RIBONUCLEASE HII"/>
    <property type="match status" value="1"/>
</dbReference>
<dbReference type="Pfam" id="PF01351">
    <property type="entry name" value="RNase_HII"/>
    <property type="match status" value="1"/>
</dbReference>
<dbReference type="SUPFAM" id="SSF53098">
    <property type="entry name" value="Ribonuclease H-like"/>
    <property type="match status" value="1"/>
</dbReference>
<dbReference type="PROSITE" id="PS51975">
    <property type="entry name" value="RNASE_H_2"/>
    <property type="match status" value="1"/>
</dbReference>
<feature type="chain" id="PRO_1000031219" description="Ribonuclease HII">
    <location>
        <begin position="1"/>
        <end position="238"/>
    </location>
</feature>
<feature type="domain" description="RNase H type-2" evidence="2">
    <location>
        <begin position="12"/>
        <end position="197"/>
    </location>
</feature>
<feature type="binding site" evidence="1">
    <location>
        <position position="18"/>
    </location>
    <ligand>
        <name>a divalent metal cation</name>
        <dbReference type="ChEBI" id="CHEBI:60240"/>
    </ligand>
</feature>
<feature type="binding site" evidence="1">
    <location>
        <position position="19"/>
    </location>
    <ligand>
        <name>a divalent metal cation</name>
        <dbReference type="ChEBI" id="CHEBI:60240"/>
    </ligand>
</feature>
<feature type="binding site" evidence="1">
    <location>
        <position position="107"/>
    </location>
    <ligand>
        <name>a divalent metal cation</name>
        <dbReference type="ChEBI" id="CHEBI:60240"/>
    </ligand>
</feature>
<reference key="1">
    <citation type="submission" date="2007-05" db="EMBL/GenBank/DDBJ databases">
        <title>Complete sequence of Thermotoga petrophila RKU-1.</title>
        <authorList>
            <consortium name="US DOE Joint Genome Institute"/>
            <person name="Copeland A."/>
            <person name="Lucas S."/>
            <person name="Lapidus A."/>
            <person name="Barry K."/>
            <person name="Glavina del Rio T."/>
            <person name="Dalin E."/>
            <person name="Tice H."/>
            <person name="Pitluck S."/>
            <person name="Sims D."/>
            <person name="Brettin T."/>
            <person name="Bruce D."/>
            <person name="Detter J.C."/>
            <person name="Han C."/>
            <person name="Tapia R."/>
            <person name="Schmutz J."/>
            <person name="Larimer F."/>
            <person name="Land M."/>
            <person name="Hauser L."/>
            <person name="Kyrpides N."/>
            <person name="Mikhailova N."/>
            <person name="Nelson K."/>
            <person name="Gogarten J.P."/>
            <person name="Noll K."/>
            <person name="Richardson P."/>
        </authorList>
    </citation>
    <scope>NUCLEOTIDE SEQUENCE [LARGE SCALE GENOMIC DNA]</scope>
    <source>
        <strain>ATCC BAA-488 / DSM 13995 / JCM 10881 / RKU-1</strain>
    </source>
</reference>
<accession>A5IIL8</accession>
<organism>
    <name type="scientific">Thermotoga petrophila (strain ATCC BAA-488 / DSM 13995 / JCM 10881 / RKU-1)</name>
    <dbReference type="NCBI Taxonomy" id="390874"/>
    <lineage>
        <taxon>Bacteria</taxon>
        <taxon>Thermotogati</taxon>
        <taxon>Thermotogota</taxon>
        <taxon>Thermotogae</taxon>
        <taxon>Thermotogales</taxon>
        <taxon>Thermotogaceae</taxon>
        <taxon>Thermotoga</taxon>
    </lineage>
</organism>